<sequence length="422" mass="46292">MANGTRQKDLRERAERVIPGGMYGHESTRLLPPEFPQFFRRALGARIWDADEQPYIDYMCAYGPNLLGYRQSEIEAAADAQRLLGDTMTGPSEIMVNLAEAFVGMVRHADWAMFCKNGSDATSTAMVLARAHTGRKTILCAKGAYHGASPWNTPHTAGILASDRVHVAYYTYNDAQSLSDAFKAHDGDIAAVFATPFRHEVFEDQALAQLEFARTARKCCDETGALLVVDDVRAGFRVARDCSWTHLGIEPDLSCWGKCFANGYPISALLGSNKARDAARDIFVTGSFWFSAVPMAAAIETLRIIRETPYLETLIASGAALRAGLEAQSQRHGLELKQTGPAQMPQIFFADDPDFRIGYAWAAACLKGGVYVHPYHNMFLSAAHTVDDVTETLEATDRAFSAVLRDFASLQPHPILMQLAGA</sequence>
<feature type="chain" id="PRO_0000418897" description="Aminopentol aminotransferase">
    <location>
        <begin position="1"/>
        <end position="422"/>
    </location>
</feature>
<feature type="modified residue" description="N6-(pyridoxal phosphate)lysine" evidence="1">
    <location>
        <position position="258"/>
    </location>
</feature>
<feature type="helix" evidence="5">
    <location>
        <begin position="5"/>
        <end position="17"/>
    </location>
</feature>
<feature type="helix" evidence="5">
    <location>
        <begin position="19"/>
        <end position="21"/>
    </location>
</feature>
<feature type="strand" evidence="5">
    <location>
        <begin position="39"/>
        <end position="44"/>
    </location>
</feature>
<feature type="strand" evidence="5">
    <location>
        <begin position="46"/>
        <end position="49"/>
    </location>
</feature>
<feature type="strand" evidence="5">
    <location>
        <begin position="54"/>
        <end position="59"/>
    </location>
</feature>
<feature type="helix" evidence="5">
    <location>
        <begin position="60"/>
        <end position="62"/>
    </location>
</feature>
<feature type="helix" evidence="5">
    <location>
        <begin position="72"/>
        <end position="82"/>
    </location>
</feature>
<feature type="helix" evidence="5">
    <location>
        <begin position="94"/>
        <end position="105"/>
    </location>
</feature>
<feature type="strand" evidence="5">
    <location>
        <begin position="110"/>
        <end position="117"/>
    </location>
</feature>
<feature type="helix" evidence="5">
    <location>
        <begin position="118"/>
        <end position="133"/>
    </location>
</feature>
<feature type="strand" evidence="5">
    <location>
        <begin position="137"/>
        <end position="141"/>
    </location>
</feature>
<feature type="turn" evidence="5">
    <location>
        <begin position="150"/>
        <end position="152"/>
    </location>
</feature>
<feature type="helix" evidence="5">
    <location>
        <begin position="161"/>
        <end position="164"/>
    </location>
</feature>
<feature type="strand" evidence="5">
    <location>
        <begin position="167"/>
        <end position="170"/>
    </location>
</feature>
<feature type="helix" evidence="5">
    <location>
        <begin position="175"/>
        <end position="184"/>
    </location>
</feature>
<feature type="turn" evidence="5">
    <location>
        <begin position="185"/>
        <end position="187"/>
    </location>
</feature>
<feature type="strand" evidence="5">
    <location>
        <begin position="189"/>
        <end position="194"/>
    </location>
</feature>
<feature type="strand" evidence="5">
    <location>
        <begin position="196"/>
        <end position="198"/>
    </location>
</feature>
<feature type="helix" evidence="5">
    <location>
        <begin position="210"/>
        <end position="223"/>
    </location>
</feature>
<feature type="strand" evidence="5">
    <location>
        <begin position="226"/>
        <end position="230"/>
    </location>
</feature>
<feature type="turn" evidence="5">
    <location>
        <begin position="232"/>
        <end position="237"/>
    </location>
</feature>
<feature type="helix" evidence="5">
    <location>
        <begin position="245"/>
        <end position="247"/>
    </location>
</feature>
<feature type="strand" evidence="5">
    <location>
        <begin position="252"/>
        <end position="256"/>
    </location>
</feature>
<feature type="turn" evidence="5">
    <location>
        <begin position="258"/>
        <end position="263"/>
    </location>
</feature>
<feature type="strand" evidence="5">
    <location>
        <begin position="267"/>
        <end position="271"/>
    </location>
</feature>
<feature type="helix" evidence="5">
    <location>
        <begin position="273"/>
        <end position="275"/>
    </location>
</feature>
<feature type="helix" evidence="5">
    <location>
        <begin position="276"/>
        <end position="281"/>
    </location>
</feature>
<feature type="turn" evidence="5">
    <location>
        <begin position="287"/>
        <end position="290"/>
    </location>
</feature>
<feature type="helix" evidence="5">
    <location>
        <begin position="292"/>
        <end position="307"/>
    </location>
</feature>
<feature type="helix" evidence="5">
    <location>
        <begin position="310"/>
        <end position="332"/>
    </location>
</feature>
<feature type="strand" evidence="5">
    <location>
        <begin position="336"/>
        <end position="340"/>
    </location>
</feature>
<feature type="strand" evidence="5">
    <location>
        <begin position="346"/>
        <end position="349"/>
    </location>
</feature>
<feature type="helix" evidence="5">
    <location>
        <begin position="356"/>
        <end position="367"/>
    </location>
</feature>
<feature type="strand" evidence="5">
    <location>
        <begin position="374"/>
        <end position="376"/>
    </location>
</feature>
<feature type="helix" evidence="5">
    <location>
        <begin position="386"/>
        <end position="405"/>
    </location>
</feature>
<feature type="helix" evidence="5">
    <location>
        <begin position="407"/>
        <end position="409"/>
    </location>
</feature>
<feature type="turn" evidence="6">
    <location>
        <begin position="414"/>
        <end position="416"/>
    </location>
</feature>
<organism>
    <name type="scientific">Sphingopyxis macrogoltabida</name>
    <name type="common">Sphingomonas macrogoltabidus</name>
    <dbReference type="NCBI Taxonomy" id="33050"/>
    <lineage>
        <taxon>Bacteria</taxon>
        <taxon>Pseudomonadati</taxon>
        <taxon>Pseudomonadota</taxon>
        <taxon>Alphaproteobacteria</taxon>
        <taxon>Sphingomonadales</taxon>
        <taxon>Sphingomonadaceae</taxon>
        <taxon>Sphingopyxis</taxon>
    </lineage>
</organism>
<evidence type="ECO:0000250" key="1"/>
<evidence type="ECO:0000269" key="2">
    <source>
    </source>
</evidence>
<evidence type="ECO:0000269" key="3">
    <source>
    </source>
</evidence>
<evidence type="ECO:0000305" key="4"/>
<evidence type="ECO:0007829" key="5">
    <source>
        <dbReference type="PDB" id="6HBS"/>
    </source>
</evidence>
<evidence type="ECO:0007829" key="6">
    <source>
        <dbReference type="PDB" id="6HBV"/>
    </source>
</evidence>
<keyword id="KW-0002">3D-structure</keyword>
<keyword id="KW-0963">Cytoplasm</keyword>
<keyword id="KW-0663">Pyridoxal phosphate</keyword>
<keyword id="KW-0808">Transferase</keyword>
<comment type="function">
    <text evidence="3">Involved in degradation of fumonisin B1. Catalyzes the deamination of aminopentol (HFB1) to 2-keto-HFB1. Pyruvate is the preferred cosubstrate, but it can also use several other alpha-keto acids as amino group acceptors.</text>
</comment>
<comment type="catalytic activity">
    <reaction evidence="3">
        <text>(2S,3S,5R,10R,12S,14S,15R,16R)-2-amino-12,16-dimethylicosane-3,5,10,14,15-pentol + pyruvate = (3S,5R,10R,12S,14S,15R,16R)-3,5,10,14,15-pentahydroxy-12,16-dimethylicosan-2-one + L-alanine</text>
        <dbReference type="Rhea" id="RHEA:51068"/>
        <dbReference type="ChEBI" id="CHEBI:15361"/>
        <dbReference type="ChEBI" id="CHEBI:57972"/>
        <dbReference type="ChEBI" id="CHEBI:62526"/>
        <dbReference type="ChEBI" id="CHEBI:133941"/>
    </reaction>
</comment>
<comment type="cofactor">
    <cofactor evidence="3">
        <name>pyridoxal 5'-phosphate</name>
        <dbReference type="ChEBI" id="CHEBI:597326"/>
    </cofactor>
</comment>
<comment type="biophysicochemical properties">
    <kinetics>
        <KM evidence="3">1.1 uM for HFB1</KM>
        <KM evidence="3">490 uM for pyruvate</KM>
        <text>kcat is 104 min(-1).</text>
    </kinetics>
    <phDependence>
        <text evidence="3">Optimum pH is 8.5.</text>
    </phDependence>
    <temperatureDependence>
        <text evidence="3">Optimum temperature is 35 degrees Celsius.</text>
    </temperatureDependence>
</comment>
<comment type="subcellular location">
    <subcellularLocation>
        <location evidence="2">Cytoplasm</location>
    </subcellularLocation>
</comment>
<comment type="similarity">
    <text evidence="4">Belongs to the class-III pyridoxal-phosphate-dependent aminotransferase family.</text>
</comment>
<protein>
    <recommendedName>
        <fullName>Aminopentol aminotransferase</fullName>
        <ecNumber>2.6.1.-</ecNumber>
    </recommendedName>
</protein>
<accession>D2D3B2</accession>
<proteinExistence type="evidence at protein level"/>
<reference key="1">
    <citation type="journal article" date="2010" name="J. Biotechnol.">
        <title>Degradation of fumonisin B1 by the consecutive action of two bacterial enzymes.</title>
        <authorList>
            <person name="Heinl S."/>
            <person name="Hartinger D."/>
            <person name="Thamhesl M."/>
            <person name="Vekiru E."/>
            <person name="Krska R."/>
            <person name="Schatzmayr G."/>
            <person name="Moll W.-D."/>
            <person name="Grabherr R."/>
        </authorList>
    </citation>
    <scope>NUCLEOTIDE SEQUENCE [GENOMIC DNA]</scope>
    <source>
        <strain>MTA144</strain>
    </source>
</reference>
<reference key="2">
    <citation type="journal article" date="2010" name="Microb. Cell Fact.">
        <title>Enhancement of solubility in Escherichia coli and purification of an aminotransferase from Sphingopyxis sp. MTA144 for deamination of hydrolyzed fumonisin B(1).</title>
        <authorList>
            <person name="Hartinger D."/>
            <person name="Heinl S."/>
            <person name="Schwartz H.E."/>
            <person name="Grabherr R."/>
            <person name="Schatzmayr G."/>
            <person name="Haltrich D."/>
            <person name="Moll W.D."/>
        </authorList>
    </citation>
    <scope>PURIFICATION</scope>
    <scope>SUBCELLULAR LOCATION</scope>
    <source>
        <strain>MTA144</strain>
    </source>
</reference>
<reference key="3">
    <citation type="journal article" date="2011" name="Appl. Microbiol. Biotechnol.">
        <title>Enzyme characteristics of aminotransferase FumI of Sphingopyxis sp. MTA144 for deamination of hydrolyzed fumonisin B(1).</title>
        <authorList>
            <person name="Hartinger D."/>
            <person name="Schwartz H."/>
            <person name="Hametner C."/>
            <person name="Schatzmayr G."/>
            <person name="Haltrich D."/>
            <person name="Moll W.D."/>
        </authorList>
    </citation>
    <scope>FUNCTION</scope>
    <scope>CATALYTIC ACTIVITY</scope>
    <scope>COFACTOR</scope>
    <scope>BIOPHYSICOCHEMICAL PROPERTIES</scope>
    <source>
        <strain>MTA144</strain>
    </source>
</reference>
<dbReference type="EC" id="2.6.1.-"/>
<dbReference type="EMBL" id="FJ426269">
    <property type="protein sequence ID" value="ACS27061.1"/>
    <property type="molecule type" value="Genomic_DNA"/>
</dbReference>
<dbReference type="PDB" id="6HBS">
    <property type="method" value="X-ray"/>
    <property type="resolution" value="1.65 A"/>
    <property type="chains" value="A/B=1-422"/>
</dbReference>
<dbReference type="PDB" id="6HBV">
    <property type="method" value="X-ray"/>
    <property type="resolution" value="1.65 A"/>
    <property type="chains" value="A/B=1-422"/>
</dbReference>
<dbReference type="PDBsum" id="6HBS"/>
<dbReference type="PDBsum" id="6HBV"/>
<dbReference type="SMR" id="D2D3B2"/>
<dbReference type="BioCyc" id="MetaCyc:MONOMER-16401"/>
<dbReference type="BRENDA" id="2.6.1.B3">
    <property type="organism ID" value="8963"/>
</dbReference>
<dbReference type="GO" id="GO:0005737">
    <property type="term" value="C:cytoplasm"/>
    <property type="evidence" value="ECO:0007669"/>
    <property type="project" value="UniProtKB-SubCell"/>
</dbReference>
<dbReference type="GO" id="GO:0030170">
    <property type="term" value="F:pyridoxal phosphate binding"/>
    <property type="evidence" value="ECO:0007669"/>
    <property type="project" value="InterPro"/>
</dbReference>
<dbReference type="GO" id="GO:0008483">
    <property type="term" value="F:transaminase activity"/>
    <property type="evidence" value="ECO:0007669"/>
    <property type="project" value="InterPro"/>
</dbReference>
<dbReference type="Gene3D" id="3.90.1150.10">
    <property type="entry name" value="Aspartate Aminotransferase, domain 1"/>
    <property type="match status" value="1"/>
</dbReference>
<dbReference type="Gene3D" id="3.40.640.10">
    <property type="entry name" value="Type I PLP-dependent aspartate aminotransferase-like (Major domain)"/>
    <property type="match status" value="1"/>
</dbReference>
<dbReference type="InterPro" id="IPR005814">
    <property type="entry name" value="Aminotrans_3"/>
</dbReference>
<dbReference type="InterPro" id="IPR049704">
    <property type="entry name" value="Aminotrans_3_PPA_site"/>
</dbReference>
<dbReference type="InterPro" id="IPR015424">
    <property type="entry name" value="PyrdxlP-dep_Trfase"/>
</dbReference>
<dbReference type="InterPro" id="IPR015421">
    <property type="entry name" value="PyrdxlP-dep_Trfase_major"/>
</dbReference>
<dbReference type="InterPro" id="IPR015422">
    <property type="entry name" value="PyrdxlP-dep_Trfase_small"/>
</dbReference>
<dbReference type="PANTHER" id="PTHR43713">
    <property type="entry name" value="GLUTAMATE-1-SEMIALDEHYDE 2,1-AMINOMUTASE"/>
    <property type="match status" value="1"/>
</dbReference>
<dbReference type="PANTHER" id="PTHR43713:SF3">
    <property type="entry name" value="GLUTAMATE-1-SEMIALDEHYDE 2,1-AMINOMUTASE 1, CHLOROPLASTIC-RELATED"/>
    <property type="match status" value="1"/>
</dbReference>
<dbReference type="Pfam" id="PF00202">
    <property type="entry name" value="Aminotran_3"/>
    <property type="match status" value="1"/>
</dbReference>
<dbReference type="SUPFAM" id="SSF53383">
    <property type="entry name" value="PLP-dependent transferases"/>
    <property type="match status" value="1"/>
</dbReference>
<dbReference type="PROSITE" id="PS00600">
    <property type="entry name" value="AA_TRANSFER_CLASS_3"/>
    <property type="match status" value="1"/>
</dbReference>
<gene>
    <name type="primary">fumI</name>
</gene>
<name>FUMI_SPHMC</name>